<accession>O13516</accession>
<accession>D6W3T6</accession>
<keyword id="KW-0002">3D-structure</keyword>
<keyword id="KW-0963">Cytoplasm</keyword>
<keyword id="KW-0903">Direct protein sequencing</keyword>
<keyword id="KW-1017">Isopeptide bond</keyword>
<keyword id="KW-0539">Nucleus</keyword>
<keyword id="KW-0597">Phosphoprotein</keyword>
<keyword id="KW-1185">Reference proteome</keyword>
<keyword id="KW-0687">Ribonucleoprotein</keyword>
<keyword id="KW-0689">Ribosomal protein</keyword>
<keyword id="KW-0690">Ribosome biogenesis</keyword>
<keyword id="KW-0694">RNA-binding</keyword>
<keyword id="KW-0698">rRNA processing</keyword>
<keyword id="KW-0699">rRNA-binding</keyword>
<keyword id="KW-0832">Ubl conjugation</keyword>
<reference key="1">
    <citation type="journal article" date="1991" name="Nucleic Acids Res.">
        <title>Yeast ribosomal proteins: XII. YS11 of Saccharomyces cerevisiae is a homologue to E. coli S4 according to the gene analysis.</title>
        <authorList>
            <person name="Mizuta K."/>
            <person name="Hashimoto T."/>
            <person name="Suzuki K."/>
            <person name="Otaka E."/>
        </authorList>
    </citation>
    <scope>NUCLEOTIDE SEQUENCE [GENOMIC DNA]</scope>
</reference>
<reference key="2">
    <citation type="journal article" date="1997" name="Nature">
        <title>The nucleotide sequence of Saccharomyces cerevisiae chromosome XVI.</title>
        <authorList>
            <person name="Bussey H."/>
            <person name="Storms R.K."/>
            <person name="Ahmed A."/>
            <person name="Albermann K."/>
            <person name="Allen E."/>
            <person name="Ansorge W."/>
            <person name="Araujo R."/>
            <person name="Aparicio A."/>
            <person name="Barrell B.G."/>
            <person name="Badcock K."/>
            <person name="Benes V."/>
            <person name="Botstein D."/>
            <person name="Bowman S."/>
            <person name="Brueckner M."/>
            <person name="Carpenter J."/>
            <person name="Cherry J.M."/>
            <person name="Chung E."/>
            <person name="Churcher C.M."/>
            <person name="Coster F."/>
            <person name="Davis K."/>
            <person name="Davis R.W."/>
            <person name="Dietrich F.S."/>
            <person name="Delius H."/>
            <person name="DiPaolo T."/>
            <person name="Dubois E."/>
            <person name="Duesterhoeft A."/>
            <person name="Duncan M."/>
            <person name="Floeth M."/>
            <person name="Fortin N."/>
            <person name="Friesen J.D."/>
            <person name="Fritz C."/>
            <person name="Goffeau A."/>
            <person name="Hall J."/>
            <person name="Hebling U."/>
            <person name="Heumann K."/>
            <person name="Hilbert H."/>
            <person name="Hillier L.W."/>
            <person name="Hunicke-Smith S."/>
            <person name="Hyman R.W."/>
            <person name="Johnston M."/>
            <person name="Kalman S."/>
            <person name="Kleine K."/>
            <person name="Komp C."/>
            <person name="Kurdi O."/>
            <person name="Lashkari D."/>
            <person name="Lew H."/>
            <person name="Lin A."/>
            <person name="Lin D."/>
            <person name="Louis E.J."/>
            <person name="Marathe R."/>
            <person name="Messenguy F."/>
            <person name="Mewes H.-W."/>
            <person name="Mirtipati S."/>
            <person name="Moestl D."/>
            <person name="Mueller-Auer S."/>
            <person name="Namath A."/>
            <person name="Nentwich U."/>
            <person name="Oefner P."/>
            <person name="Pearson D."/>
            <person name="Petel F.X."/>
            <person name="Pohl T.M."/>
            <person name="Purnelle B."/>
            <person name="Rajandream M.A."/>
            <person name="Rechmann S."/>
            <person name="Rieger M."/>
            <person name="Riles L."/>
            <person name="Roberts D."/>
            <person name="Schaefer M."/>
            <person name="Scharfe M."/>
            <person name="Scherens B."/>
            <person name="Schramm S."/>
            <person name="Schroeder M."/>
            <person name="Sdicu A.-M."/>
            <person name="Tettelin H."/>
            <person name="Urrestarazu L.A."/>
            <person name="Ushinsky S."/>
            <person name="Vierendeels F."/>
            <person name="Vissers S."/>
            <person name="Voss H."/>
            <person name="Walsh S.V."/>
            <person name="Wambutt R."/>
            <person name="Wang Y."/>
            <person name="Wedler E."/>
            <person name="Wedler H."/>
            <person name="Winnett E."/>
            <person name="Zhong W.-W."/>
            <person name="Zollner A."/>
            <person name="Vo D.H."/>
            <person name="Hani J."/>
        </authorList>
    </citation>
    <scope>NUCLEOTIDE SEQUENCE [LARGE SCALE GENOMIC DNA]</scope>
    <source>
        <strain>ATCC 204508 / S288c</strain>
    </source>
</reference>
<reference key="3">
    <citation type="journal article" date="2014" name="G3 (Bethesda)">
        <title>The reference genome sequence of Saccharomyces cerevisiae: Then and now.</title>
        <authorList>
            <person name="Engel S.R."/>
            <person name="Dietrich F.S."/>
            <person name="Fisk D.G."/>
            <person name="Binkley G."/>
            <person name="Balakrishnan R."/>
            <person name="Costanzo M.C."/>
            <person name="Dwight S.S."/>
            <person name="Hitz B.C."/>
            <person name="Karra K."/>
            <person name="Nash R.S."/>
            <person name="Weng S."/>
            <person name="Wong E.D."/>
            <person name="Lloyd P."/>
            <person name="Skrzypek M.S."/>
            <person name="Miyasato S.R."/>
            <person name="Simison M."/>
            <person name="Cherry J.M."/>
        </authorList>
    </citation>
    <scope>GENOME REANNOTATION</scope>
    <source>
        <strain>ATCC 204508 / S288c</strain>
    </source>
</reference>
<reference key="4">
    <citation type="journal article" date="1982" name="Biochemistry">
        <title>Isolation of seventeen proteins and amino-terminal amino acid sequences of eight proteins from cytoplasmic ribosomes of yeast.</title>
        <authorList>
            <person name="Otaka E."/>
            <person name="Higo K."/>
            <person name="Osawa S."/>
        </authorList>
    </citation>
    <scope>PROTEIN SEQUENCE OF 2-24</scope>
</reference>
<reference key="5">
    <citation type="journal article" date="1998" name="Yeast">
        <title>The list of cytoplasmic ribosomal proteins of Saccharomyces cerevisiae.</title>
        <authorList>
            <person name="Planta R.J."/>
            <person name="Mager W.H."/>
        </authorList>
    </citation>
    <scope>NOMENCLATURE</scope>
    <scope>SUBUNIT</scope>
</reference>
<reference key="6">
    <citation type="journal article" date="2003" name="Nature">
        <title>Global analysis of protein localization in budding yeast.</title>
        <authorList>
            <person name="Huh W.-K."/>
            <person name="Falvo J.V."/>
            <person name="Gerke L.C."/>
            <person name="Carroll A.S."/>
            <person name="Howson R.W."/>
            <person name="Weissman J.S."/>
            <person name="O'Shea E.K."/>
        </authorList>
    </citation>
    <scope>SUBCELLULAR LOCATION [LARGE SCALE ANALYSIS]</scope>
</reference>
<reference key="7">
    <citation type="journal article" date="2003" name="Nature">
        <title>Global analysis of protein expression in yeast.</title>
        <authorList>
            <person name="Ghaemmaghami S."/>
            <person name="Huh W.-K."/>
            <person name="Bower K."/>
            <person name="Howson R.W."/>
            <person name="Belle A."/>
            <person name="Dephoure N."/>
            <person name="O'Shea E.K."/>
            <person name="Weissman J.S."/>
        </authorList>
    </citation>
    <scope>LEVEL OF PROTEIN EXPRESSION [LARGE SCALE ANALYSIS]</scope>
</reference>
<reference key="8">
    <citation type="journal article" date="2004" name="Eukaryot. Cell">
        <title>The small-subunit processome is a ribosome assembly intermediate.</title>
        <authorList>
            <person name="Bernstein K.A."/>
            <person name="Gallagher J.E.G."/>
            <person name="Mitchell B.M."/>
            <person name="Granneman S."/>
            <person name="Baserga S.J."/>
        </authorList>
    </citation>
    <scope>FUNCTION</scope>
    <scope>INTERACTION WITH MPP10 AND SNORNA U3</scope>
    <scope>IDENTIFICATION IN SSU PROCESSOME</scope>
    <scope>SUBCELLULAR LOCATION</scope>
</reference>
<reference key="9">
    <citation type="journal article" date="2014" name="Curr. Opin. Struct. Biol.">
        <title>A new system for naming ribosomal proteins.</title>
        <authorList>
            <person name="Ban N."/>
            <person name="Beckmann R."/>
            <person name="Cate J.H.D."/>
            <person name="Dinman J.D."/>
            <person name="Dragon F."/>
            <person name="Ellis S.R."/>
            <person name="Lafontaine D.L.J."/>
            <person name="Lindahl L."/>
            <person name="Liljas A."/>
            <person name="Lipton J.M."/>
            <person name="McAlear M.A."/>
            <person name="Moore P.B."/>
            <person name="Noller H.F."/>
            <person name="Ortega J."/>
            <person name="Panse V.G."/>
            <person name="Ramakrishnan V."/>
            <person name="Spahn C.M.T."/>
            <person name="Steitz T.A."/>
            <person name="Tchorzewski M."/>
            <person name="Tollervey D."/>
            <person name="Warren A.J."/>
            <person name="Williamson J.R."/>
            <person name="Wilson D."/>
            <person name="Yonath A."/>
            <person name="Yusupov M."/>
        </authorList>
    </citation>
    <scope>NOMENCLATURE</scope>
</reference>
<reference key="10">
    <citation type="journal article" date="2001" name="Cell">
        <title>Structure of the 80S ribosome from Saccharomyces cerevisiae -- tRNA-ribosome and subunit-subunit interactions.</title>
        <authorList>
            <person name="Spahn C.M.T."/>
            <person name="Beckmann R."/>
            <person name="Eswar N."/>
            <person name="Penczek P.A."/>
            <person name="Sali A."/>
            <person name="Blobel G."/>
            <person name="Frank J."/>
        </authorList>
    </citation>
    <scope>3D-STRUCTURE MODELING OF 19-196</scope>
    <scope>ELECTRON MICROSCOPY</scope>
</reference>
<reference key="11">
    <citation type="journal article" date="2004" name="EMBO J.">
        <title>Domain movements of elongation factor eEF2 and the eukaryotic 80S ribosome facilitate tRNA translocation.</title>
        <authorList>
            <person name="Spahn C.M.T."/>
            <person name="Gomez-Lorenzo M.G."/>
            <person name="Grassucci R.A."/>
            <person name="Joergensen R."/>
            <person name="Andersen G.R."/>
            <person name="Beckmann R."/>
            <person name="Penczek P.A."/>
            <person name="Ballesta J.P.G."/>
            <person name="Frank J."/>
        </authorList>
    </citation>
    <scope>3D-STRUCTURE MODELING OF 19-197</scope>
    <scope>ELECTRON MICROSCOPY</scope>
</reference>
<reference key="12">
    <citation type="journal article" date="2010" name="Science">
        <title>Crystal structure of the eukaryotic ribosome.</title>
        <authorList>
            <person name="Ben-Shem A."/>
            <person name="Jenner L."/>
            <person name="Yusupova G."/>
            <person name="Yusupov M."/>
        </authorList>
    </citation>
    <scope>X-RAY CRYSTALLOGRAPHY (4.00 ANGSTROMS) OF 80S RIBOSOME</scope>
</reference>
<reference key="13">
    <citation type="journal article" date="2011" name="Science">
        <title>The structure of the eukaryotic ribosome at 3.0 A resolution.</title>
        <authorList>
            <person name="Ben-Shem A."/>
            <person name="Garreau de Loubresse N."/>
            <person name="Melnikov S."/>
            <person name="Jenner L."/>
            <person name="Yusupova G."/>
            <person name="Yusupov M."/>
        </authorList>
    </citation>
    <scope>X-RAY CRYSTALLOGRAPHY (3.00 ANGSTROMS) OF 80S RIBOSOME</scope>
    <scope>SUBUNIT</scope>
    <scope>SUBCELLULAR LOCATION</scope>
</reference>
<sequence length="197" mass="22443">MPRAPRTYSKTYSTPKRPYESSRLDAELKLAGEFGLKNKKEIYRISFQLSKIRRAARDLLTRDEKDPKRLFEGNALIRRLVRVGVLSEDKKKLDYVLALKVEDFLERRLQTQVYKLGLAKSVHHARVLITQRHIAVGKQIVNIPSFMVRLDSEKHIDFAPTSPFGGARPGRVARRNAARKAEASGEAADEADEADEE</sequence>
<evidence type="ECO:0000250" key="1">
    <source>
        <dbReference type="UniProtKB" id="P05755"/>
    </source>
</evidence>
<evidence type="ECO:0000255" key="2">
    <source>
        <dbReference type="PROSITE-ProRule" id="PRU00182"/>
    </source>
</evidence>
<evidence type="ECO:0000256" key="3">
    <source>
        <dbReference type="SAM" id="MobiDB-lite"/>
    </source>
</evidence>
<evidence type="ECO:0000269" key="4">
    <source>
    </source>
</evidence>
<evidence type="ECO:0000269" key="5">
    <source>
    </source>
</evidence>
<evidence type="ECO:0000269" key="6">
    <source>
    </source>
</evidence>
<evidence type="ECO:0000269" key="7">
    <source>
    </source>
</evidence>
<evidence type="ECO:0000303" key="8">
    <source>
    </source>
</evidence>
<evidence type="ECO:0000303" key="9">
    <source>
    </source>
</evidence>
<evidence type="ECO:0000305" key="10"/>
<evidence type="ECO:0000305" key="11">
    <source>
    </source>
</evidence>
<evidence type="ECO:0000305" key="12">
    <source>
    </source>
</evidence>
<evidence type="ECO:0007829" key="13">
    <source>
        <dbReference type="PDB" id="6RBD"/>
    </source>
</evidence>
<evidence type="ECO:0007829" key="14">
    <source>
        <dbReference type="PDB" id="6ZVI"/>
    </source>
</evidence>
<evidence type="ECO:0007829" key="15">
    <source>
        <dbReference type="PDB" id="8C00"/>
    </source>
</evidence>
<evidence type="ECO:0007829" key="16">
    <source>
        <dbReference type="PDB" id="8C01"/>
    </source>
</evidence>
<evidence type="ECO:0007829" key="17">
    <source>
        <dbReference type="PDB" id="8C83"/>
    </source>
</evidence>
<comment type="function">
    <text evidence="5 11">Component of the ribosome, a large ribonucleoprotein complex responsible for the synthesis of proteins in the cell. The small ribosomal subunit (SSU) binds messenger RNAs (mRNAs) and translates the encoded message by selecting cognate aminoacyl-transfer RNA (tRNA) molecules. The large subunit (LSU) contains the ribosomal catalytic site termed the peptidyl transferase center (PTC), which catalyzes the formation of peptide bonds, thereby polymerizing the amino acids delivered by tRNAs into a polypeptide chain. The nascent polypeptides leave the ribosome through a tunnel in the LSU and interact with protein factors that function in enzymatic processing, targeting, and the membrane insertion of nascent chains at the exit of the ribosomal tunnel (PubMed:22096102). uS4 is involved in nucleolar processing of pre-18S ribosomal RNA and ribosome assembly (PubMed:15590835).</text>
</comment>
<comment type="subunit">
    <text evidence="5 6 12">Component of the small ribosomal subunit (SSU). Mature yeast ribosomes consist of a small (40S) and a large (60S) subunit. The 40S small subunit contains 1 molecule of ribosomal RNA (18S rRNA) and 33 different proteins (encoded by 57 genes). The large 60S subunit contains 3 rRNA molecules (25S, 5.8S and 5S rRNA) and 46 different proteins (encoded by 81 genes) (PubMed:22096102, PubMed:9559554). Interacts with snoRNA U3. uS11 interacts with MPP10. Component of the ribosomal small subunit (SSU) processome composed of at least 40 protein subunits and snoRNA U3 (PubMed:15590835).</text>
</comment>
<comment type="interaction">
    <interactant intactId="EBI-16176">
        <id>O13516</id>
    </interactant>
    <interactant intactId="EBI-16181">
        <id>P05755</id>
        <label>RPS9B</label>
    </interactant>
    <organismsDiffer>false</organismsDiffer>
    <experiments>3</experiments>
</comment>
<comment type="subcellular location">
    <subcellularLocation>
        <location evidence="6">Cytoplasm</location>
    </subcellularLocation>
    <subcellularLocation>
        <location evidence="5">Nucleus</location>
        <location evidence="5">Nucleolus</location>
    </subcellularLocation>
</comment>
<comment type="miscellaneous">
    <text evidence="4">Present with 106000 molecules/cell in log phase SD medium.</text>
</comment>
<comment type="miscellaneous">
    <text evidence="10">There are 2 genes for uS4 in yeast.</text>
</comment>
<comment type="similarity">
    <text evidence="10">Belongs to the universal ribosomal protein uS4 family.</text>
</comment>
<protein>
    <recommendedName>
        <fullName evidence="8">Small ribosomal subunit protein uS4A</fullName>
    </recommendedName>
    <alternativeName>
        <fullName evidence="9">40S ribosomal protein S9-A</fullName>
    </alternativeName>
    <alternativeName>
        <fullName>RP21</fullName>
    </alternativeName>
    <alternativeName>
        <fullName>S13</fullName>
    </alternativeName>
    <alternativeName>
        <fullName>YP28</fullName>
    </alternativeName>
    <alternativeName>
        <fullName>YS11</fullName>
    </alternativeName>
</protein>
<gene>
    <name evidence="9" type="primary">RPS9A</name>
    <name type="synonym">RPS13A</name>
    <name type="synonym">YS11A</name>
    <name type="ordered locus">YPL081W</name>
</gene>
<name>RS9A_YEAST</name>
<organism>
    <name type="scientific">Saccharomyces cerevisiae (strain ATCC 204508 / S288c)</name>
    <name type="common">Baker's yeast</name>
    <dbReference type="NCBI Taxonomy" id="559292"/>
    <lineage>
        <taxon>Eukaryota</taxon>
        <taxon>Fungi</taxon>
        <taxon>Dikarya</taxon>
        <taxon>Ascomycota</taxon>
        <taxon>Saccharomycotina</taxon>
        <taxon>Saccharomycetes</taxon>
        <taxon>Saccharomycetales</taxon>
        <taxon>Saccharomycetaceae</taxon>
        <taxon>Saccharomyces</taxon>
    </lineage>
</organism>
<dbReference type="EMBL" id="D00724">
    <property type="protein sequence ID" value="BAA00626.1"/>
    <property type="molecule type" value="Genomic_DNA"/>
</dbReference>
<dbReference type="EMBL" id="U41849">
    <property type="protein sequence ID" value="AAB68268.1"/>
    <property type="molecule type" value="Genomic_DNA"/>
</dbReference>
<dbReference type="EMBL" id="BK006949">
    <property type="protein sequence ID" value="DAA11352.1"/>
    <property type="molecule type" value="Genomic_DNA"/>
</dbReference>
<dbReference type="PIR" id="S16822">
    <property type="entry name" value="S16822"/>
</dbReference>
<dbReference type="RefSeq" id="NP_015244.1">
    <property type="nucleotide sequence ID" value="NM_001183895.1"/>
</dbReference>
<dbReference type="PDB" id="3J6X">
    <property type="method" value="EM"/>
    <property type="resolution" value="6.10 A"/>
    <property type="chains" value="S9=1-197"/>
</dbReference>
<dbReference type="PDB" id="3J6Y">
    <property type="method" value="EM"/>
    <property type="resolution" value="6.10 A"/>
    <property type="chains" value="S9=1-197"/>
</dbReference>
<dbReference type="PDB" id="3J77">
    <property type="method" value="EM"/>
    <property type="resolution" value="6.20 A"/>
    <property type="chains" value="S9=1-197"/>
</dbReference>
<dbReference type="PDB" id="3J78">
    <property type="method" value="EM"/>
    <property type="resolution" value="6.30 A"/>
    <property type="chains" value="S9=1-197"/>
</dbReference>
<dbReference type="PDB" id="4U3M">
    <property type="method" value="X-ray"/>
    <property type="resolution" value="3.00 A"/>
    <property type="chains" value="S9/s9=2-197"/>
</dbReference>
<dbReference type="PDB" id="4U3N">
    <property type="method" value="X-ray"/>
    <property type="resolution" value="3.20 A"/>
    <property type="chains" value="S9/s9=2-197"/>
</dbReference>
<dbReference type="PDB" id="4U3U">
    <property type="method" value="X-ray"/>
    <property type="resolution" value="2.90 A"/>
    <property type="chains" value="S9/s9=2-197"/>
</dbReference>
<dbReference type="PDB" id="4U4N">
    <property type="method" value="X-ray"/>
    <property type="resolution" value="3.10 A"/>
    <property type="chains" value="S9/s9=2-197"/>
</dbReference>
<dbReference type="PDB" id="4U4O">
    <property type="method" value="X-ray"/>
    <property type="resolution" value="3.60 A"/>
    <property type="chains" value="S9/s9=2-197"/>
</dbReference>
<dbReference type="PDB" id="4U4Q">
    <property type="method" value="X-ray"/>
    <property type="resolution" value="3.00 A"/>
    <property type="chains" value="S9/s9=2-197"/>
</dbReference>
<dbReference type="PDB" id="4U4R">
    <property type="method" value="X-ray"/>
    <property type="resolution" value="2.80 A"/>
    <property type="chains" value="S9/s9=2-197"/>
</dbReference>
<dbReference type="PDB" id="4U4U">
    <property type="method" value="X-ray"/>
    <property type="resolution" value="3.00 A"/>
    <property type="chains" value="S9/s9=2-197"/>
</dbReference>
<dbReference type="PDB" id="4U4Y">
    <property type="method" value="X-ray"/>
    <property type="resolution" value="3.20 A"/>
    <property type="chains" value="S9/s9=2-197"/>
</dbReference>
<dbReference type="PDB" id="4U4Z">
    <property type="method" value="X-ray"/>
    <property type="resolution" value="3.10 A"/>
    <property type="chains" value="S9/s9=2-197"/>
</dbReference>
<dbReference type="PDB" id="4U50">
    <property type="method" value="X-ray"/>
    <property type="resolution" value="3.20 A"/>
    <property type="chains" value="S9/s9=2-197"/>
</dbReference>
<dbReference type="PDB" id="4U51">
    <property type="method" value="X-ray"/>
    <property type="resolution" value="3.20 A"/>
    <property type="chains" value="S9/s9=2-197"/>
</dbReference>
<dbReference type="PDB" id="4U52">
    <property type="method" value="X-ray"/>
    <property type="resolution" value="3.00 A"/>
    <property type="chains" value="S9/s9=2-197"/>
</dbReference>
<dbReference type="PDB" id="4U53">
    <property type="method" value="X-ray"/>
    <property type="resolution" value="3.30 A"/>
    <property type="chains" value="S9/s9=2-197"/>
</dbReference>
<dbReference type="PDB" id="4U55">
    <property type="method" value="X-ray"/>
    <property type="resolution" value="3.20 A"/>
    <property type="chains" value="S9/s9=2-197"/>
</dbReference>
<dbReference type="PDB" id="4U56">
    <property type="method" value="X-ray"/>
    <property type="resolution" value="3.45 A"/>
    <property type="chains" value="S9/s9=2-197"/>
</dbReference>
<dbReference type="PDB" id="4U6F">
    <property type="method" value="X-ray"/>
    <property type="resolution" value="3.10 A"/>
    <property type="chains" value="S9/s9=2-197"/>
</dbReference>
<dbReference type="PDB" id="4V4B">
    <property type="method" value="EM"/>
    <property type="resolution" value="11.70 A"/>
    <property type="chains" value="AD=19-197"/>
</dbReference>
<dbReference type="PDB" id="4V6I">
    <property type="method" value="EM"/>
    <property type="resolution" value="8.80 A"/>
    <property type="chains" value="AC=1-197"/>
</dbReference>
<dbReference type="PDB" id="4V7R">
    <property type="method" value="X-ray"/>
    <property type="resolution" value="4.00 A"/>
    <property type="chains" value="AE/CE=1-197"/>
</dbReference>
<dbReference type="PDB" id="4V88">
    <property type="method" value="X-ray"/>
    <property type="resolution" value="3.00 A"/>
    <property type="chains" value="AJ/CJ=1-197"/>
</dbReference>
<dbReference type="PDB" id="4V8Y">
    <property type="method" value="EM"/>
    <property type="resolution" value="4.30 A"/>
    <property type="chains" value="AJ=1-197"/>
</dbReference>
<dbReference type="PDB" id="4V8Z">
    <property type="method" value="EM"/>
    <property type="resolution" value="6.60 A"/>
    <property type="chains" value="AJ=1-197"/>
</dbReference>
<dbReference type="PDB" id="4V92">
    <property type="method" value="EM"/>
    <property type="resolution" value="3.70 A"/>
    <property type="chains" value="J=2-180"/>
</dbReference>
<dbReference type="PDB" id="5DAT">
    <property type="method" value="X-ray"/>
    <property type="resolution" value="3.15 A"/>
    <property type="chains" value="S9/s9=2-197"/>
</dbReference>
<dbReference type="PDB" id="5DC3">
    <property type="method" value="X-ray"/>
    <property type="resolution" value="3.25 A"/>
    <property type="chains" value="S9/s9=2-197"/>
</dbReference>
<dbReference type="PDB" id="5DGE">
    <property type="method" value="X-ray"/>
    <property type="resolution" value="3.45 A"/>
    <property type="chains" value="S9/s9=2-197"/>
</dbReference>
<dbReference type="PDB" id="5DGF">
    <property type="method" value="X-ray"/>
    <property type="resolution" value="3.30 A"/>
    <property type="chains" value="S9/s9=2-197"/>
</dbReference>
<dbReference type="PDB" id="5DGV">
    <property type="method" value="X-ray"/>
    <property type="resolution" value="3.10 A"/>
    <property type="chains" value="S9/s9=2-197"/>
</dbReference>
<dbReference type="PDB" id="5FCI">
    <property type="method" value="X-ray"/>
    <property type="resolution" value="3.40 A"/>
    <property type="chains" value="S9/s9=2-197"/>
</dbReference>
<dbReference type="PDB" id="5FCJ">
    <property type="method" value="X-ray"/>
    <property type="resolution" value="3.10 A"/>
    <property type="chains" value="S9/s9=2-197"/>
</dbReference>
<dbReference type="PDB" id="5I4L">
    <property type="method" value="X-ray"/>
    <property type="resolution" value="3.10 A"/>
    <property type="chains" value="S9/s9=2-186"/>
</dbReference>
<dbReference type="PDB" id="5JPQ">
    <property type="method" value="EM"/>
    <property type="resolution" value="7.30 A"/>
    <property type="chains" value="u=1-197"/>
</dbReference>
<dbReference type="PDB" id="5JUO">
    <property type="method" value="EM"/>
    <property type="resolution" value="4.00 A"/>
    <property type="chains" value="GB=1-197"/>
</dbReference>
<dbReference type="PDB" id="5JUP">
    <property type="method" value="EM"/>
    <property type="resolution" value="3.50 A"/>
    <property type="chains" value="GB=1-197"/>
</dbReference>
<dbReference type="PDB" id="5JUS">
    <property type="method" value="EM"/>
    <property type="resolution" value="4.20 A"/>
    <property type="chains" value="GB=1-197"/>
</dbReference>
<dbReference type="PDB" id="5JUT">
    <property type="method" value="EM"/>
    <property type="resolution" value="4.00 A"/>
    <property type="chains" value="GB=1-197"/>
</dbReference>
<dbReference type="PDB" id="5JUU">
    <property type="method" value="EM"/>
    <property type="resolution" value="4.00 A"/>
    <property type="chains" value="GB=1-197"/>
</dbReference>
<dbReference type="PDB" id="5LL6">
    <property type="method" value="EM"/>
    <property type="resolution" value="3.90 A"/>
    <property type="chains" value="W=1-197"/>
</dbReference>
<dbReference type="PDB" id="5LYB">
    <property type="method" value="X-ray"/>
    <property type="resolution" value="3.25 A"/>
    <property type="chains" value="S9/s9=2-186"/>
</dbReference>
<dbReference type="PDB" id="5M1J">
    <property type="method" value="EM"/>
    <property type="resolution" value="3.30 A"/>
    <property type="chains" value="J2=2-186"/>
</dbReference>
<dbReference type="PDB" id="5MC6">
    <property type="method" value="EM"/>
    <property type="resolution" value="3.80 A"/>
    <property type="chains" value="W=1-197"/>
</dbReference>
<dbReference type="PDB" id="5MEI">
    <property type="method" value="X-ray"/>
    <property type="resolution" value="3.50 A"/>
    <property type="chains" value="K/s9=2-186"/>
</dbReference>
<dbReference type="PDB" id="5NDG">
    <property type="method" value="X-ray"/>
    <property type="resolution" value="3.70 A"/>
    <property type="chains" value="S9/s9=2-186"/>
</dbReference>
<dbReference type="PDB" id="5NDV">
    <property type="method" value="X-ray"/>
    <property type="resolution" value="3.30 A"/>
    <property type="chains" value="S9/s9=2-186"/>
</dbReference>
<dbReference type="PDB" id="5NDW">
    <property type="method" value="X-ray"/>
    <property type="resolution" value="3.70 A"/>
    <property type="chains" value="S9/s9=2-186"/>
</dbReference>
<dbReference type="PDB" id="5OBM">
    <property type="method" value="X-ray"/>
    <property type="resolution" value="3.40 A"/>
    <property type="chains" value="S9/s9=2-186"/>
</dbReference>
<dbReference type="PDB" id="5ON6">
    <property type="method" value="X-ray"/>
    <property type="resolution" value="3.10 A"/>
    <property type="chains" value="K/s9=2-186"/>
</dbReference>
<dbReference type="PDB" id="5TBW">
    <property type="method" value="X-ray"/>
    <property type="resolution" value="3.00 A"/>
    <property type="chains" value="K/s9=2-186"/>
</dbReference>
<dbReference type="PDB" id="5TGA">
    <property type="method" value="X-ray"/>
    <property type="resolution" value="3.30 A"/>
    <property type="chains" value="S9/s9=2-186"/>
</dbReference>
<dbReference type="PDB" id="5TGM">
    <property type="method" value="X-ray"/>
    <property type="resolution" value="3.50 A"/>
    <property type="chains" value="S9/s9=2-186"/>
</dbReference>
<dbReference type="PDB" id="5TZS">
    <property type="method" value="EM"/>
    <property type="resolution" value="5.10 A"/>
    <property type="chains" value="9=1-197"/>
</dbReference>
<dbReference type="PDB" id="5WLC">
    <property type="method" value="EM"/>
    <property type="resolution" value="3.80 A"/>
    <property type="chains" value="L9=1-197"/>
</dbReference>
<dbReference type="PDB" id="5WYJ">
    <property type="method" value="EM"/>
    <property type="resolution" value="8.70 A"/>
    <property type="chains" value="SK=1-197"/>
</dbReference>
<dbReference type="PDB" id="5WYK">
    <property type="method" value="EM"/>
    <property type="resolution" value="4.50 A"/>
    <property type="chains" value="SK=1-197"/>
</dbReference>
<dbReference type="PDB" id="6EML">
    <property type="method" value="EM"/>
    <property type="resolution" value="3.60 A"/>
    <property type="chains" value="W=1-197"/>
</dbReference>
<dbReference type="PDB" id="6FAI">
    <property type="method" value="EM"/>
    <property type="resolution" value="3.40 A"/>
    <property type="chains" value="J=1-197"/>
</dbReference>
<dbReference type="PDB" id="6GQ1">
    <property type="method" value="EM"/>
    <property type="resolution" value="4.40 A"/>
    <property type="chains" value="z=2-186"/>
</dbReference>
<dbReference type="PDB" id="6GQB">
    <property type="method" value="EM"/>
    <property type="resolution" value="3.90 A"/>
    <property type="chains" value="z=2-186"/>
</dbReference>
<dbReference type="PDB" id="6GQV">
    <property type="method" value="EM"/>
    <property type="resolution" value="4.00 A"/>
    <property type="chains" value="z=2-186"/>
</dbReference>
<dbReference type="PDB" id="6HHQ">
    <property type="method" value="X-ray"/>
    <property type="resolution" value="3.10 A"/>
    <property type="chains" value="K/s9=1-197"/>
</dbReference>
<dbReference type="PDB" id="6I7O">
    <property type="method" value="EM"/>
    <property type="resolution" value="5.30 A"/>
    <property type="chains" value="W/Wb=2-186"/>
</dbReference>
<dbReference type="PDB" id="6KE6">
    <property type="method" value="EM"/>
    <property type="resolution" value="3.40 A"/>
    <property type="chains" value="SK=1-197"/>
</dbReference>
<dbReference type="PDB" id="6LQP">
    <property type="method" value="EM"/>
    <property type="resolution" value="3.20 A"/>
    <property type="chains" value="SK=1-197"/>
</dbReference>
<dbReference type="PDB" id="6LQQ">
    <property type="method" value="EM"/>
    <property type="resolution" value="4.10 A"/>
    <property type="chains" value="SK=1-197"/>
</dbReference>
<dbReference type="PDB" id="6LQR">
    <property type="method" value="EM"/>
    <property type="resolution" value="8.60 A"/>
    <property type="chains" value="SK=1-197"/>
</dbReference>
<dbReference type="PDB" id="6LQS">
    <property type="method" value="EM"/>
    <property type="resolution" value="3.80 A"/>
    <property type="chains" value="SK=1-197"/>
</dbReference>
<dbReference type="PDB" id="6LQT">
    <property type="method" value="EM"/>
    <property type="resolution" value="4.90 A"/>
    <property type="chains" value="SK=1-197"/>
</dbReference>
<dbReference type="PDB" id="6LQU">
    <property type="method" value="EM"/>
    <property type="resolution" value="3.70 A"/>
    <property type="chains" value="SK=1-197"/>
</dbReference>
<dbReference type="PDB" id="6LQV">
    <property type="method" value="EM"/>
    <property type="resolution" value="4.80 A"/>
    <property type="chains" value="SK=1-197"/>
</dbReference>
<dbReference type="PDB" id="6Q8Y">
    <property type="method" value="EM"/>
    <property type="resolution" value="3.10 A"/>
    <property type="chains" value="W=9-186"/>
</dbReference>
<dbReference type="PDB" id="6RBD">
    <property type="method" value="EM"/>
    <property type="resolution" value="3.47 A"/>
    <property type="chains" value="J=1-197"/>
</dbReference>
<dbReference type="PDB" id="6RBE">
    <property type="method" value="EM"/>
    <property type="resolution" value="3.80 A"/>
    <property type="chains" value="J=1-197"/>
</dbReference>
<dbReference type="PDB" id="6S47">
    <property type="method" value="EM"/>
    <property type="resolution" value="3.28 A"/>
    <property type="chains" value="BK=2-197"/>
</dbReference>
<dbReference type="PDB" id="6SNT">
    <property type="method" value="EM"/>
    <property type="resolution" value="2.80 A"/>
    <property type="chains" value="J=1-197"/>
</dbReference>
<dbReference type="PDB" id="6SV4">
    <property type="method" value="EM"/>
    <property type="resolution" value="3.30 A"/>
    <property type="chains" value="W/Wb/Wc=1-197"/>
</dbReference>
<dbReference type="PDB" id="6T4Q">
    <property type="method" value="EM"/>
    <property type="resolution" value="2.60 A"/>
    <property type="chains" value="SJ=2-185"/>
</dbReference>
<dbReference type="PDB" id="6T7I">
    <property type="method" value="EM"/>
    <property type="resolution" value="3.20 A"/>
    <property type="chains" value="SJ=1-197"/>
</dbReference>
<dbReference type="PDB" id="6T7T">
    <property type="method" value="EM"/>
    <property type="resolution" value="3.10 A"/>
    <property type="chains" value="SJ=1-197"/>
</dbReference>
<dbReference type="PDB" id="6T83">
    <property type="method" value="EM"/>
    <property type="resolution" value="4.00 A"/>
    <property type="chains" value="Jb/k=1-197"/>
</dbReference>
<dbReference type="PDB" id="6TB3">
    <property type="method" value="EM"/>
    <property type="resolution" value="2.80 A"/>
    <property type="chains" value="W=2-185"/>
</dbReference>
<dbReference type="PDB" id="6TNU">
    <property type="method" value="EM"/>
    <property type="resolution" value="3.10 A"/>
    <property type="chains" value="W=2-185"/>
</dbReference>
<dbReference type="PDB" id="6WDR">
    <property type="method" value="EM"/>
    <property type="resolution" value="3.70 A"/>
    <property type="chains" value="J=2-186"/>
</dbReference>
<dbReference type="PDB" id="6XIQ">
    <property type="method" value="EM"/>
    <property type="resolution" value="4.20 A"/>
    <property type="chains" value="z=1-197"/>
</dbReference>
<dbReference type="PDB" id="6XIR">
    <property type="method" value="EM"/>
    <property type="resolution" value="3.20 A"/>
    <property type="chains" value="z=1-197"/>
</dbReference>
<dbReference type="PDB" id="6Y7C">
    <property type="method" value="EM"/>
    <property type="resolution" value="3.80 A"/>
    <property type="chains" value="J=1-197"/>
</dbReference>
<dbReference type="PDB" id="6Z6J">
    <property type="method" value="EM"/>
    <property type="resolution" value="3.40 A"/>
    <property type="chains" value="SJ=1-197"/>
</dbReference>
<dbReference type="PDB" id="6Z6K">
    <property type="method" value="EM"/>
    <property type="resolution" value="3.40 A"/>
    <property type="chains" value="SJ=1-197"/>
</dbReference>
<dbReference type="PDB" id="6ZCE">
    <property type="method" value="EM"/>
    <property type="resolution" value="5.30 A"/>
    <property type="chains" value="K=1-197"/>
</dbReference>
<dbReference type="PDB" id="6ZQA">
    <property type="method" value="EM"/>
    <property type="resolution" value="4.40 A"/>
    <property type="chains" value="DJ=1-197"/>
</dbReference>
<dbReference type="PDB" id="6ZQB">
    <property type="method" value="EM"/>
    <property type="resolution" value="3.90 A"/>
    <property type="chains" value="DJ=1-197"/>
</dbReference>
<dbReference type="PDB" id="6ZQC">
    <property type="method" value="EM"/>
    <property type="resolution" value="3.80 A"/>
    <property type="chains" value="DJ=1-197"/>
</dbReference>
<dbReference type="PDB" id="6ZQD">
    <property type="method" value="EM"/>
    <property type="resolution" value="3.80 A"/>
    <property type="chains" value="DJ=1-197"/>
</dbReference>
<dbReference type="PDB" id="6ZQE">
    <property type="method" value="EM"/>
    <property type="resolution" value="7.10 A"/>
    <property type="chains" value="DJ=1-197"/>
</dbReference>
<dbReference type="PDB" id="6ZQF">
    <property type="method" value="EM"/>
    <property type="resolution" value="4.90 A"/>
    <property type="chains" value="DJ=1-197"/>
</dbReference>
<dbReference type="PDB" id="6ZQG">
    <property type="method" value="EM"/>
    <property type="resolution" value="3.50 A"/>
    <property type="chains" value="DJ=1-197"/>
</dbReference>
<dbReference type="PDB" id="6ZU9">
    <property type="method" value="EM"/>
    <property type="resolution" value="6.20 A"/>
    <property type="chains" value="W=1-197"/>
</dbReference>
<dbReference type="PDB" id="6ZVI">
    <property type="method" value="EM"/>
    <property type="resolution" value="3.00 A"/>
    <property type="chains" value="r=2-186"/>
</dbReference>
<dbReference type="PDB" id="7A1G">
    <property type="method" value="EM"/>
    <property type="resolution" value="3.00 A"/>
    <property type="chains" value="W=2-185"/>
</dbReference>
<dbReference type="PDB" id="7AJT">
    <property type="method" value="EM"/>
    <property type="resolution" value="4.60 A"/>
    <property type="chains" value="DJ=1-197"/>
</dbReference>
<dbReference type="PDB" id="7AJU">
    <property type="method" value="EM"/>
    <property type="resolution" value="3.80 A"/>
    <property type="chains" value="DJ=1-197"/>
</dbReference>
<dbReference type="PDB" id="7B7D">
    <property type="method" value="EM"/>
    <property type="resolution" value="3.30 A"/>
    <property type="chains" value="W=2-185"/>
</dbReference>
<dbReference type="PDB" id="7D4I">
    <property type="method" value="EM"/>
    <property type="resolution" value="4.00 A"/>
    <property type="chains" value="SK=1-197"/>
</dbReference>
<dbReference type="PDB" id="7D5S">
    <property type="method" value="EM"/>
    <property type="resolution" value="4.60 A"/>
    <property type="chains" value="SK=1-197"/>
</dbReference>
<dbReference type="PDB" id="7D5T">
    <property type="method" value="EM"/>
    <property type="resolution" value="6.00 A"/>
    <property type="chains" value="SK=1-197"/>
</dbReference>
<dbReference type="PDB" id="7D63">
    <property type="method" value="EM"/>
    <property type="resolution" value="12.30 A"/>
    <property type="chains" value="SK=1-197"/>
</dbReference>
<dbReference type="PDB" id="7MPI">
    <property type="method" value="EM"/>
    <property type="resolution" value="3.05 A"/>
    <property type="chains" value="BJ=2-186"/>
</dbReference>
<dbReference type="PDB" id="7MPJ">
    <property type="method" value="EM"/>
    <property type="resolution" value="2.70 A"/>
    <property type="chains" value="BJ=2-186"/>
</dbReference>
<dbReference type="PDB" id="7N8B">
    <property type="method" value="EM"/>
    <property type="resolution" value="3.05 A"/>
    <property type="chains" value="BJ=2-186"/>
</dbReference>
<dbReference type="PDB" id="7NRC">
    <property type="method" value="EM"/>
    <property type="resolution" value="3.90 A"/>
    <property type="chains" value="SW=2-185"/>
</dbReference>
<dbReference type="PDB" id="7NRD">
    <property type="method" value="EM"/>
    <property type="resolution" value="4.36 A"/>
    <property type="chains" value="SW=2-186"/>
</dbReference>
<dbReference type="PDB" id="7SUK">
    <property type="method" value="EM"/>
    <property type="resolution" value="3.99 A"/>
    <property type="chains" value="L9=10-184"/>
</dbReference>
<dbReference type="PDB" id="7WTL">
    <property type="method" value="EM"/>
    <property type="resolution" value="3.30 A"/>
    <property type="chains" value="SJ=1-197"/>
</dbReference>
<dbReference type="PDB" id="7WTM">
    <property type="method" value="EM"/>
    <property type="resolution" value="3.50 A"/>
    <property type="chains" value="SJ=1-197"/>
</dbReference>
<dbReference type="PDB" id="7WTN">
    <property type="method" value="EM"/>
    <property type="resolution" value="3.40 A"/>
    <property type="chains" value="SJ=1-197"/>
</dbReference>
<dbReference type="PDB" id="7WTO">
    <property type="method" value="EM"/>
    <property type="resolution" value="3.50 A"/>
    <property type="chains" value="SJ=1-197"/>
</dbReference>
<dbReference type="PDB" id="7WTP">
    <property type="method" value="EM"/>
    <property type="resolution" value="3.80 A"/>
    <property type="chains" value="SJ=1-197"/>
</dbReference>
<dbReference type="PDB" id="7WTQ">
    <property type="method" value="EM"/>
    <property type="resolution" value="3.70 A"/>
    <property type="chains" value="SJ=1-197"/>
</dbReference>
<dbReference type="PDB" id="7WTR">
    <property type="method" value="EM"/>
    <property type="resolution" value="3.50 A"/>
    <property type="chains" value="SJ=1-197"/>
</dbReference>
<dbReference type="PDB" id="7ZPQ">
    <property type="method" value="EM"/>
    <property type="resolution" value="3.47 A"/>
    <property type="chains" value="AJ=2-185"/>
</dbReference>
<dbReference type="PDB" id="7ZRS">
    <property type="method" value="EM"/>
    <property type="resolution" value="4.80 A"/>
    <property type="chains" value="AJ=2-185"/>
</dbReference>
<dbReference type="PDB" id="7ZUW">
    <property type="method" value="EM"/>
    <property type="resolution" value="4.30 A"/>
    <property type="chains" value="AJ=2-185"/>
</dbReference>
<dbReference type="PDB" id="7ZUX">
    <property type="method" value="EM"/>
    <property type="resolution" value="2.50 A"/>
    <property type="chains" value="DJ=2-185"/>
</dbReference>
<dbReference type="PDB" id="7ZW0">
    <property type="method" value="EM"/>
    <property type="resolution" value="2.40 A"/>
    <property type="chains" value="sW=1-197"/>
</dbReference>
<dbReference type="PDB" id="8BN3">
    <property type="method" value="EM"/>
    <property type="resolution" value="2.40 A"/>
    <property type="chains" value="S9=2-186"/>
</dbReference>
<dbReference type="PDB" id="8BQD">
    <property type="method" value="EM"/>
    <property type="resolution" value="3.90 A"/>
    <property type="chains" value="W=2-185"/>
</dbReference>
<dbReference type="PDB" id="8BQX">
    <property type="method" value="EM"/>
    <property type="resolution" value="3.80 A"/>
    <property type="chains" value="W=2-185"/>
</dbReference>
<dbReference type="PDB" id="8C00">
    <property type="method" value="EM"/>
    <property type="resolution" value="2.90 A"/>
    <property type="chains" value="W=1-197"/>
</dbReference>
<dbReference type="PDB" id="8C01">
    <property type="method" value="EM"/>
    <property type="resolution" value="2.70 A"/>
    <property type="chains" value="W=1-197"/>
</dbReference>
<dbReference type="PDB" id="8C83">
    <property type="method" value="EM"/>
    <property type="resolution" value="3.00 A"/>
    <property type="chains" value="W=1-197"/>
</dbReference>
<dbReference type="PDB" id="8CAH">
    <property type="method" value="EM"/>
    <property type="resolution" value="3.00 A"/>
    <property type="chains" value="W=1-197"/>
</dbReference>
<dbReference type="PDB" id="8CAS">
    <property type="method" value="EM"/>
    <property type="resolution" value="3.30 A"/>
    <property type="chains" value="W=1-197"/>
</dbReference>
<dbReference type="PDB" id="8CBJ">
    <property type="method" value="EM"/>
    <property type="resolution" value="3.80 A"/>
    <property type="chains" value="J=1-197"/>
</dbReference>
<dbReference type="PDB" id="8CCS">
    <property type="method" value="EM"/>
    <property type="resolution" value="1.97 A"/>
    <property type="chains" value="m=1-197"/>
</dbReference>
<dbReference type="PDB" id="8CDL">
    <property type="method" value="EM"/>
    <property type="resolution" value="2.72 A"/>
    <property type="chains" value="m=1-197"/>
</dbReference>
<dbReference type="PDB" id="8CDR">
    <property type="method" value="EM"/>
    <property type="resolution" value="2.04 A"/>
    <property type="chains" value="m=1-197"/>
</dbReference>
<dbReference type="PDB" id="8CEH">
    <property type="method" value="EM"/>
    <property type="resolution" value="2.05 A"/>
    <property type="chains" value="m=1-197"/>
</dbReference>
<dbReference type="PDB" id="8CF5">
    <property type="method" value="EM"/>
    <property type="resolution" value="2.71 A"/>
    <property type="chains" value="m=1-197"/>
</dbReference>
<dbReference type="PDB" id="8CG8">
    <property type="method" value="EM"/>
    <property type="resolution" value="2.57 A"/>
    <property type="chains" value="m=1-197"/>
</dbReference>
<dbReference type="PDB" id="8CGN">
    <property type="method" value="EM"/>
    <property type="resolution" value="2.28 A"/>
    <property type="chains" value="m=1-197"/>
</dbReference>
<dbReference type="PDB" id="8CIV">
    <property type="method" value="EM"/>
    <property type="resolution" value="2.47 A"/>
    <property type="chains" value="m=1-197"/>
</dbReference>
<dbReference type="PDB" id="8CKU">
    <property type="method" value="EM"/>
    <property type="resolution" value="3.11 A"/>
    <property type="chains" value="m=1-197"/>
</dbReference>
<dbReference type="PDB" id="8CMJ">
    <property type="method" value="EM"/>
    <property type="resolution" value="3.79 A"/>
    <property type="chains" value="m=1-197"/>
</dbReference>
<dbReference type="PDB" id="8EUB">
    <property type="method" value="EM"/>
    <property type="resolution" value="2.52 A"/>
    <property type="chains" value="BJ=1-197"/>
</dbReference>
<dbReference type="PDB" id="8EVP">
    <property type="method" value="EM"/>
    <property type="resolution" value="2.38 A"/>
    <property type="chains" value="BJ=1-197"/>
</dbReference>
<dbReference type="PDB" id="8EVQ">
    <property type="method" value="EM"/>
    <property type="resolution" value="2.72 A"/>
    <property type="chains" value="BJ=1-197"/>
</dbReference>
<dbReference type="PDB" id="8EVR">
    <property type="method" value="EM"/>
    <property type="resolution" value="2.87 A"/>
    <property type="chains" value="BJ=1-197"/>
</dbReference>
<dbReference type="PDB" id="8EVS">
    <property type="method" value="EM"/>
    <property type="resolution" value="2.62 A"/>
    <property type="chains" value="BJ=1-197"/>
</dbReference>
<dbReference type="PDB" id="8EVT">
    <property type="method" value="EM"/>
    <property type="resolution" value="2.20 A"/>
    <property type="chains" value="BJ=1-197"/>
</dbReference>
<dbReference type="PDB" id="8EWB">
    <property type="method" value="EM"/>
    <property type="resolution" value="2.87 A"/>
    <property type="chains" value="BJ=1-197"/>
</dbReference>
<dbReference type="PDB" id="8EWC">
    <property type="method" value="EM"/>
    <property type="resolution" value="2.45 A"/>
    <property type="chains" value="BJ=1-197"/>
</dbReference>
<dbReference type="PDB" id="8K2D">
    <property type="method" value="EM"/>
    <property type="resolution" value="3.20 A"/>
    <property type="chains" value="SJ=1-197"/>
</dbReference>
<dbReference type="PDB" id="8K82">
    <property type="method" value="EM"/>
    <property type="resolution" value="3.00 A"/>
    <property type="chains" value="SJ=1-197"/>
</dbReference>
<dbReference type="PDB" id="8P4V">
    <property type="method" value="X-ray"/>
    <property type="resolution" value="3.16 A"/>
    <property type="chains" value="K/s9=1-197"/>
</dbReference>
<dbReference type="PDB" id="8P9A">
    <property type="method" value="X-ray"/>
    <property type="resolution" value="2.90 A"/>
    <property type="chains" value="K/s9=1-197"/>
</dbReference>
<dbReference type="PDB" id="8T2X">
    <property type="method" value="EM"/>
    <property type="resolution" value="2.46 A"/>
    <property type="chains" value="BJ=1-197"/>
</dbReference>
<dbReference type="PDB" id="8T2Y">
    <property type="method" value="EM"/>
    <property type="resolution" value="2.20 A"/>
    <property type="chains" value="BJ=1-197"/>
</dbReference>
<dbReference type="PDB" id="8T2Z">
    <property type="method" value="EM"/>
    <property type="resolution" value="2.40 A"/>
    <property type="chains" value="BJ=1-197"/>
</dbReference>
<dbReference type="PDB" id="8T30">
    <property type="method" value="EM"/>
    <property type="resolution" value="2.88 A"/>
    <property type="chains" value="BJ=1-197"/>
</dbReference>
<dbReference type="PDB" id="8T3A">
    <property type="method" value="EM"/>
    <property type="resolution" value="2.86 A"/>
    <property type="chains" value="BJ=1-197"/>
</dbReference>
<dbReference type="PDB" id="8T3B">
    <property type="method" value="EM"/>
    <property type="resolution" value="3.08 A"/>
    <property type="chains" value="BJ=1-197"/>
</dbReference>
<dbReference type="PDB" id="8T3C">
    <property type="method" value="EM"/>
    <property type="resolution" value="3.86 A"/>
    <property type="chains" value="BJ=1-197"/>
</dbReference>
<dbReference type="PDB" id="8T3D">
    <property type="method" value="EM"/>
    <property type="resolution" value="2.95 A"/>
    <property type="chains" value="BJ=1-197"/>
</dbReference>
<dbReference type="PDB" id="8T3E">
    <property type="method" value="EM"/>
    <property type="resolution" value="3.04 A"/>
    <property type="chains" value="BJ=1-197"/>
</dbReference>
<dbReference type="PDB" id="8T3F">
    <property type="method" value="EM"/>
    <property type="resolution" value="3.09 A"/>
    <property type="chains" value="BJ=1-197"/>
</dbReference>
<dbReference type="PDB" id="8UT0">
    <property type="method" value="EM"/>
    <property type="resolution" value="3.22 A"/>
    <property type="chains" value="SW=2-185"/>
</dbReference>
<dbReference type="PDB" id="8UTI">
    <property type="method" value="EM"/>
    <property type="resolution" value="3.13 A"/>
    <property type="chains" value="SW=2-185"/>
</dbReference>
<dbReference type="PDB" id="8XU8">
    <property type="method" value="EM"/>
    <property type="resolution" value="3.40 A"/>
    <property type="chains" value="SW=2-185"/>
</dbReference>
<dbReference type="PDB" id="8Y0U">
    <property type="method" value="EM"/>
    <property type="resolution" value="3.59 A"/>
    <property type="chains" value="SJ=1-197"/>
</dbReference>
<dbReference type="PDB" id="8YLD">
    <property type="method" value="EM"/>
    <property type="resolution" value="3.90 A"/>
    <property type="chains" value="SW=2-185"/>
</dbReference>
<dbReference type="PDB" id="8YLR">
    <property type="method" value="EM"/>
    <property type="resolution" value="3.90 A"/>
    <property type="chains" value="SW=2-185"/>
</dbReference>
<dbReference type="PDB" id="8Z70">
    <property type="method" value="EM"/>
    <property type="resolution" value="3.20 A"/>
    <property type="chains" value="SW=2-185"/>
</dbReference>
<dbReference type="PDB" id="8Z71">
    <property type="method" value="EM"/>
    <property type="resolution" value="3.60 A"/>
    <property type="chains" value="SW=2-185"/>
</dbReference>
<dbReference type="PDB" id="9F9S">
    <property type="method" value="EM"/>
    <property type="resolution" value="2.90 A"/>
    <property type="chains" value="Rj/Sj=1-197"/>
</dbReference>
<dbReference type="PDBsum" id="3J6X"/>
<dbReference type="PDBsum" id="3J6Y"/>
<dbReference type="PDBsum" id="3J77"/>
<dbReference type="PDBsum" id="3J78"/>
<dbReference type="PDBsum" id="4U3M"/>
<dbReference type="PDBsum" id="4U3N"/>
<dbReference type="PDBsum" id="4U3U"/>
<dbReference type="PDBsum" id="4U4N"/>
<dbReference type="PDBsum" id="4U4O"/>
<dbReference type="PDBsum" id="4U4Q"/>
<dbReference type="PDBsum" id="4U4R"/>
<dbReference type="PDBsum" id="4U4U"/>
<dbReference type="PDBsum" id="4U4Y"/>
<dbReference type="PDBsum" id="4U4Z"/>
<dbReference type="PDBsum" id="4U50"/>
<dbReference type="PDBsum" id="4U51"/>
<dbReference type="PDBsum" id="4U52"/>
<dbReference type="PDBsum" id="4U53"/>
<dbReference type="PDBsum" id="4U55"/>
<dbReference type="PDBsum" id="4U56"/>
<dbReference type="PDBsum" id="4U6F"/>
<dbReference type="PDBsum" id="4V4B"/>
<dbReference type="PDBsum" id="4V6I"/>
<dbReference type="PDBsum" id="4V7R"/>
<dbReference type="PDBsum" id="4V88"/>
<dbReference type="PDBsum" id="4V8Y"/>
<dbReference type="PDBsum" id="4V8Z"/>
<dbReference type="PDBsum" id="4V92"/>
<dbReference type="PDBsum" id="5DAT"/>
<dbReference type="PDBsum" id="5DC3"/>
<dbReference type="PDBsum" id="5DGE"/>
<dbReference type="PDBsum" id="5DGF"/>
<dbReference type="PDBsum" id="5DGV"/>
<dbReference type="PDBsum" id="5FCI"/>
<dbReference type="PDBsum" id="5FCJ"/>
<dbReference type="PDBsum" id="5I4L"/>
<dbReference type="PDBsum" id="5JPQ"/>
<dbReference type="PDBsum" id="5JUO"/>
<dbReference type="PDBsum" id="5JUP"/>
<dbReference type="PDBsum" id="5JUS"/>
<dbReference type="PDBsum" id="5JUT"/>
<dbReference type="PDBsum" id="5JUU"/>
<dbReference type="PDBsum" id="5LL6"/>
<dbReference type="PDBsum" id="5LYB"/>
<dbReference type="PDBsum" id="5M1J"/>
<dbReference type="PDBsum" id="5MC6"/>
<dbReference type="PDBsum" id="5MEI"/>
<dbReference type="PDBsum" id="5NDG"/>
<dbReference type="PDBsum" id="5NDV"/>
<dbReference type="PDBsum" id="5NDW"/>
<dbReference type="PDBsum" id="5OBM"/>
<dbReference type="PDBsum" id="5ON6"/>
<dbReference type="PDBsum" id="5TBW"/>
<dbReference type="PDBsum" id="5TGA"/>
<dbReference type="PDBsum" id="5TGM"/>
<dbReference type="PDBsum" id="5TZS"/>
<dbReference type="PDBsum" id="5WLC"/>
<dbReference type="PDBsum" id="5WYJ"/>
<dbReference type="PDBsum" id="5WYK"/>
<dbReference type="PDBsum" id="6EML"/>
<dbReference type="PDBsum" id="6FAI"/>
<dbReference type="PDBsum" id="6GQ1"/>
<dbReference type="PDBsum" id="6GQB"/>
<dbReference type="PDBsum" id="6GQV"/>
<dbReference type="PDBsum" id="6HHQ"/>
<dbReference type="PDBsum" id="6I7O"/>
<dbReference type="PDBsum" id="6KE6"/>
<dbReference type="PDBsum" id="6LQP"/>
<dbReference type="PDBsum" id="6LQQ"/>
<dbReference type="PDBsum" id="6LQR"/>
<dbReference type="PDBsum" id="6LQS"/>
<dbReference type="PDBsum" id="6LQT"/>
<dbReference type="PDBsum" id="6LQU"/>
<dbReference type="PDBsum" id="6LQV"/>
<dbReference type="PDBsum" id="6Q8Y"/>
<dbReference type="PDBsum" id="6RBD"/>
<dbReference type="PDBsum" id="6RBE"/>
<dbReference type="PDBsum" id="6S47"/>
<dbReference type="PDBsum" id="6SNT"/>
<dbReference type="PDBsum" id="6SV4"/>
<dbReference type="PDBsum" id="6T4Q"/>
<dbReference type="PDBsum" id="6T7I"/>
<dbReference type="PDBsum" id="6T7T"/>
<dbReference type="PDBsum" id="6T83"/>
<dbReference type="PDBsum" id="6TB3"/>
<dbReference type="PDBsum" id="6TNU"/>
<dbReference type="PDBsum" id="6WDR"/>
<dbReference type="PDBsum" id="6XIQ"/>
<dbReference type="PDBsum" id="6XIR"/>
<dbReference type="PDBsum" id="6Y7C"/>
<dbReference type="PDBsum" id="6Z6J"/>
<dbReference type="PDBsum" id="6Z6K"/>
<dbReference type="PDBsum" id="6ZCE"/>
<dbReference type="PDBsum" id="6ZQA"/>
<dbReference type="PDBsum" id="6ZQB"/>
<dbReference type="PDBsum" id="6ZQC"/>
<dbReference type="PDBsum" id="6ZQD"/>
<dbReference type="PDBsum" id="6ZQE"/>
<dbReference type="PDBsum" id="6ZQF"/>
<dbReference type="PDBsum" id="6ZQG"/>
<dbReference type="PDBsum" id="6ZU9"/>
<dbReference type="PDBsum" id="6ZVI"/>
<dbReference type="PDBsum" id="7A1G"/>
<dbReference type="PDBsum" id="7AJT"/>
<dbReference type="PDBsum" id="7AJU"/>
<dbReference type="PDBsum" id="7B7D"/>
<dbReference type="PDBsum" id="7D4I"/>
<dbReference type="PDBsum" id="7D5S"/>
<dbReference type="PDBsum" id="7D5T"/>
<dbReference type="PDBsum" id="7D63"/>
<dbReference type="PDBsum" id="7MPI"/>
<dbReference type="PDBsum" id="7MPJ"/>
<dbReference type="PDBsum" id="7N8B"/>
<dbReference type="PDBsum" id="7NRC"/>
<dbReference type="PDBsum" id="7NRD"/>
<dbReference type="PDBsum" id="7SUK"/>
<dbReference type="PDBsum" id="7WTL"/>
<dbReference type="PDBsum" id="7WTM"/>
<dbReference type="PDBsum" id="7WTN"/>
<dbReference type="PDBsum" id="7WTO"/>
<dbReference type="PDBsum" id="7WTP"/>
<dbReference type="PDBsum" id="7WTQ"/>
<dbReference type="PDBsum" id="7WTR"/>
<dbReference type="PDBsum" id="7ZPQ"/>
<dbReference type="PDBsum" id="7ZRS"/>
<dbReference type="PDBsum" id="7ZUW"/>
<dbReference type="PDBsum" id="7ZUX"/>
<dbReference type="PDBsum" id="7ZW0"/>
<dbReference type="PDBsum" id="8BN3"/>
<dbReference type="PDBsum" id="8BQD"/>
<dbReference type="PDBsum" id="8BQX"/>
<dbReference type="PDBsum" id="8C00"/>
<dbReference type="PDBsum" id="8C01"/>
<dbReference type="PDBsum" id="8C83"/>
<dbReference type="PDBsum" id="8CAH"/>
<dbReference type="PDBsum" id="8CAS"/>
<dbReference type="PDBsum" id="8CBJ"/>
<dbReference type="PDBsum" id="8CCS"/>
<dbReference type="PDBsum" id="8CDL"/>
<dbReference type="PDBsum" id="8CDR"/>
<dbReference type="PDBsum" id="8CEH"/>
<dbReference type="PDBsum" id="8CF5"/>
<dbReference type="PDBsum" id="8CG8"/>
<dbReference type="PDBsum" id="8CGN"/>
<dbReference type="PDBsum" id="8CIV"/>
<dbReference type="PDBsum" id="8CKU"/>
<dbReference type="PDBsum" id="8CMJ"/>
<dbReference type="PDBsum" id="8EUB"/>
<dbReference type="PDBsum" id="8EVP"/>
<dbReference type="PDBsum" id="8EVQ"/>
<dbReference type="PDBsum" id="8EVR"/>
<dbReference type="PDBsum" id="8EVS"/>
<dbReference type="PDBsum" id="8EVT"/>
<dbReference type="PDBsum" id="8EWB"/>
<dbReference type="PDBsum" id="8EWC"/>
<dbReference type="PDBsum" id="8K2D"/>
<dbReference type="PDBsum" id="8K82"/>
<dbReference type="PDBsum" id="8P4V"/>
<dbReference type="PDBsum" id="8P9A"/>
<dbReference type="PDBsum" id="8T2X"/>
<dbReference type="PDBsum" id="8T2Y"/>
<dbReference type="PDBsum" id="8T2Z"/>
<dbReference type="PDBsum" id="8T30"/>
<dbReference type="PDBsum" id="8T3A"/>
<dbReference type="PDBsum" id="8T3B"/>
<dbReference type="PDBsum" id="8T3C"/>
<dbReference type="PDBsum" id="8T3D"/>
<dbReference type="PDBsum" id="8T3E"/>
<dbReference type="PDBsum" id="8T3F"/>
<dbReference type="PDBsum" id="8UT0"/>
<dbReference type="PDBsum" id="8UTI"/>
<dbReference type="PDBsum" id="8XU8"/>
<dbReference type="PDBsum" id="8Y0U"/>
<dbReference type="PDBsum" id="8YLD"/>
<dbReference type="PDBsum" id="8YLR"/>
<dbReference type="PDBsum" id="8Z70"/>
<dbReference type="PDBsum" id="8Z71"/>
<dbReference type="PDBsum" id="9F9S"/>
<dbReference type="EMDB" id="EMD-0047"/>
<dbReference type="EMDB" id="EMD-0048"/>
<dbReference type="EMDB" id="EMD-0049"/>
<dbReference type="EMDB" id="EMD-0949"/>
<dbReference type="EMDB" id="EMD-0950"/>
<dbReference type="EMDB" id="EMD-0951"/>
<dbReference type="EMDB" id="EMD-0952"/>
<dbReference type="EMDB" id="EMD-0953"/>
<dbReference type="EMDB" id="EMD-0954"/>
<dbReference type="EMDB" id="EMD-0955"/>
<dbReference type="EMDB" id="EMD-10098"/>
<dbReference type="EMDB" id="EMD-10262"/>
<dbReference type="EMDB" id="EMD-10315"/>
<dbReference type="EMDB" id="EMD-10377"/>
<dbReference type="EMDB" id="EMD-10396"/>
<dbReference type="EMDB" id="EMD-10397"/>
<dbReference type="EMDB" id="EMD-10398"/>
<dbReference type="EMDB" id="EMD-10431"/>
<dbReference type="EMDB" id="EMD-10537"/>
<dbReference type="EMDB" id="EMD-10713"/>
<dbReference type="EMDB" id="EMD-11096"/>
<dbReference type="EMDB" id="EMD-11097"/>
<dbReference type="EMDB" id="EMD-11160"/>
<dbReference type="EMDB" id="EMD-11357"/>
<dbReference type="EMDB" id="EMD-11358"/>
<dbReference type="EMDB" id="EMD-11359"/>
<dbReference type="EMDB" id="EMD-11360"/>
<dbReference type="EMDB" id="EMD-11361"/>
<dbReference type="EMDB" id="EMD-11362"/>
<dbReference type="EMDB" id="EMD-11363"/>
<dbReference type="EMDB" id="EMD-11439"/>
<dbReference type="EMDB" id="EMD-11457"/>
<dbReference type="EMDB" id="EMD-11608"/>
<dbReference type="EMDB" id="EMD-11807"/>
<dbReference type="EMDB" id="EMD-11808"/>
<dbReference type="EMDB" id="EMD-12081"/>
<dbReference type="EMDB" id="EMD-12534"/>
<dbReference type="EMDB" id="EMD-12535"/>
<dbReference type="EMDB" id="EMD-14861"/>
<dbReference type="EMDB" id="EMD-14921"/>
<dbReference type="EMDB" id="EMD-14978"/>
<dbReference type="EMDB" id="EMD-14979"/>
<dbReference type="EMDB" id="EMD-14990"/>
<dbReference type="EMDB" id="EMD-16127"/>
<dbReference type="EMDB" id="EMD-16182"/>
<dbReference type="EMDB" id="EMD-16191"/>
<dbReference type="EMDB" id="EMD-16347"/>
<dbReference type="EMDB" id="EMD-16349"/>
<dbReference type="EMDB" id="EMD-16470"/>
<dbReference type="EMDB" id="EMD-16525"/>
<dbReference type="EMDB" id="EMD-16533"/>
<dbReference type="EMDB" id="EMD-16541"/>
<dbReference type="EMDB" id="EMD-16563"/>
<dbReference type="EMDB" id="EMD-16591"/>
<dbReference type="EMDB" id="EMD-16594"/>
<dbReference type="EMDB" id="EMD-16609"/>
<dbReference type="EMDB" id="EMD-16616"/>
<dbReference type="EMDB" id="EMD-16634"/>
<dbReference type="EMDB" id="EMD-16648"/>
<dbReference type="EMDB" id="EMD-16684"/>
<dbReference type="EMDB" id="EMD-16702"/>
<dbReference type="EMDB" id="EMD-16729"/>
<dbReference type="EMDB" id="EMD-21644"/>
<dbReference type="EMDB" id="EMD-22196"/>
<dbReference type="EMDB" id="EMD-22198"/>
<dbReference type="EMDB" id="EMD-23934"/>
<dbReference type="EMDB" id="EMD-23935"/>
<dbReference type="EMDB" id="EMD-24235"/>
<dbReference type="EMDB" id="EMD-25441"/>
<dbReference type="EMDB" id="EMD-28610"/>
<dbReference type="EMDB" id="EMD-28632"/>
<dbReference type="EMDB" id="EMD-28633"/>
<dbReference type="EMDB" id="EMD-28634"/>
<dbReference type="EMDB" id="EMD-28635"/>
<dbReference type="EMDB" id="EMD-28636"/>
<dbReference type="EMDB" id="EMD-28642"/>
<dbReference type="EMDB" id="EMD-28643"/>
<dbReference type="EMDB" id="EMD-30574"/>
<dbReference type="EMDB" id="EMD-30584"/>
<dbReference type="EMDB" id="EMD-30585"/>
<dbReference type="EMDB" id="EMD-30588"/>
<dbReference type="EMDB" id="EMD-32790"/>
<dbReference type="EMDB" id="EMD-32791"/>
<dbReference type="EMDB" id="EMD-32792"/>
<dbReference type="EMDB" id="EMD-32793"/>
<dbReference type="EMDB" id="EMD-32794"/>
<dbReference type="EMDB" id="EMD-32795"/>
<dbReference type="EMDB" id="EMD-32796"/>
<dbReference type="EMDB" id="EMD-3461"/>
<dbReference type="EMDB" id="EMD-36839"/>
<dbReference type="EMDB" id="EMD-36945"/>
<dbReference type="EMDB" id="EMD-38660"/>
<dbReference type="EMDB" id="EMD-40990"/>
<dbReference type="EMDB" id="EMD-40991"/>
<dbReference type="EMDB" id="EMD-40992"/>
<dbReference type="EMDB" id="EMD-40993"/>
<dbReference type="EMDB" id="EMD-40997"/>
<dbReference type="EMDB" id="EMD-40998"/>
<dbReference type="EMDB" id="EMD-40999"/>
<dbReference type="EMDB" id="EMD-41000"/>
<dbReference type="EMDB" id="EMD-41001"/>
<dbReference type="EMDB" id="EMD-41002"/>
<dbReference type="EMDB" id="EMD-4140"/>
<dbReference type="EMDB" id="EMD-4214"/>
<dbReference type="EMDB" id="EMD-42525"/>
<dbReference type="EMDB" id="EMD-42540"/>
<dbReference type="EMDB" id="EMD-4427"/>
<dbReference type="EMDB" id="EMD-4474"/>
<dbReference type="EMDB" id="EMD-4792"/>
<dbReference type="EMDB" id="EMD-4793"/>
<dbReference type="EMDB" id="EMD-50259"/>
<dbReference type="EMDB" id="EMD-6695"/>
<dbReference type="EMDB" id="EMD-6696"/>
<dbReference type="EMDB" id="EMD-8473"/>
<dbReference type="EMDB" id="EMD-8859"/>
<dbReference type="EMDB" id="EMD-9964"/>
<dbReference type="SMR" id="O13516"/>
<dbReference type="BioGRID" id="36100">
    <property type="interactions" value="722"/>
</dbReference>
<dbReference type="ComplexPortal" id="CPX-1599">
    <property type="entry name" value="40S cytosolic small ribosomal subunit"/>
</dbReference>
<dbReference type="FunCoup" id="O13516">
    <property type="interactions" value="1346"/>
</dbReference>
<dbReference type="IntAct" id="O13516">
    <property type="interactions" value="100"/>
</dbReference>
<dbReference type="MINT" id="O13516"/>
<dbReference type="STRING" id="4932.YPL081W"/>
<dbReference type="iPTMnet" id="O13516"/>
<dbReference type="PaxDb" id="4932-YPL081W"/>
<dbReference type="PeptideAtlas" id="O13516"/>
<dbReference type="TopDownProteomics" id="O13516"/>
<dbReference type="EnsemblFungi" id="YPL081W_mRNA">
    <property type="protein sequence ID" value="YPL081W"/>
    <property type="gene ID" value="YPL081W"/>
</dbReference>
<dbReference type="GeneID" id="856024"/>
<dbReference type="KEGG" id="sce:YPL081W"/>
<dbReference type="AGR" id="SGD:S000006002"/>
<dbReference type="SGD" id="S000006002">
    <property type="gene designation" value="RPS9A"/>
</dbReference>
<dbReference type="VEuPathDB" id="FungiDB:YPL081W"/>
<dbReference type="eggNOG" id="KOG3301">
    <property type="taxonomic scope" value="Eukaryota"/>
</dbReference>
<dbReference type="GeneTree" id="ENSGT00550000074829"/>
<dbReference type="HOGENOM" id="CLU_089738_0_0_1"/>
<dbReference type="InParanoid" id="O13516"/>
<dbReference type="OMA" id="RQFITHG"/>
<dbReference type="OrthoDB" id="1697570at2759"/>
<dbReference type="BioCyc" id="YEAST:G3O-33987-MONOMER"/>
<dbReference type="Reactome" id="R-SCE-156827">
    <property type="pathway name" value="L13a-mediated translational silencing of Ceruloplasmin expression"/>
</dbReference>
<dbReference type="Reactome" id="R-SCE-1799339">
    <property type="pathway name" value="SRP-dependent cotranslational protein targeting to membrane"/>
</dbReference>
<dbReference type="Reactome" id="R-SCE-6791226">
    <property type="pathway name" value="Major pathway of rRNA processing in the nucleolus and cytosol"/>
</dbReference>
<dbReference type="Reactome" id="R-SCE-72649">
    <property type="pathway name" value="Translation initiation complex formation"/>
</dbReference>
<dbReference type="Reactome" id="R-SCE-72689">
    <property type="pathway name" value="Formation of a pool of free 40S subunits"/>
</dbReference>
<dbReference type="Reactome" id="R-SCE-72695">
    <property type="pathway name" value="Formation of the ternary complex, and subsequently, the 43S complex"/>
</dbReference>
<dbReference type="Reactome" id="R-SCE-72702">
    <property type="pathway name" value="Ribosomal scanning and start codon recognition"/>
</dbReference>
<dbReference type="Reactome" id="R-SCE-72706">
    <property type="pathway name" value="GTP hydrolysis and joining of the 60S ribosomal subunit"/>
</dbReference>
<dbReference type="Reactome" id="R-SCE-975956">
    <property type="pathway name" value="Nonsense Mediated Decay (NMD) independent of the Exon Junction Complex (EJC)"/>
</dbReference>
<dbReference type="Reactome" id="R-SCE-975957">
    <property type="pathway name" value="Nonsense Mediated Decay (NMD) enhanced by the Exon Junction Complex (EJC)"/>
</dbReference>
<dbReference type="BioGRID-ORCS" id="856024">
    <property type="hits" value="1 hit in 10 CRISPR screens"/>
</dbReference>
<dbReference type="PRO" id="PR:O13516"/>
<dbReference type="Proteomes" id="UP000002311">
    <property type="component" value="Chromosome XVI"/>
</dbReference>
<dbReference type="RNAct" id="O13516">
    <property type="molecule type" value="protein"/>
</dbReference>
<dbReference type="GO" id="GO:0030686">
    <property type="term" value="C:90S preribosome"/>
    <property type="evidence" value="ECO:0007005"/>
    <property type="project" value="SGD"/>
</dbReference>
<dbReference type="GO" id="GO:0005737">
    <property type="term" value="C:cytoplasm"/>
    <property type="evidence" value="ECO:0007005"/>
    <property type="project" value="SGD"/>
</dbReference>
<dbReference type="GO" id="GO:0005829">
    <property type="term" value="C:cytosol"/>
    <property type="evidence" value="ECO:0000304"/>
    <property type="project" value="Reactome"/>
</dbReference>
<dbReference type="GO" id="GO:0022627">
    <property type="term" value="C:cytosolic small ribosomal subunit"/>
    <property type="evidence" value="ECO:0000314"/>
    <property type="project" value="SGD"/>
</dbReference>
<dbReference type="GO" id="GO:0005730">
    <property type="term" value="C:nucleolus"/>
    <property type="evidence" value="ECO:0007669"/>
    <property type="project" value="UniProtKB-SubCell"/>
</dbReference>
<dbReference type="GO" id="GO:0005654">
    <property type="term" value="C:nucleoplasm"/>
    <property type="evidence" value="ECO:0000304"/>
    <property type="project" value="Reactome"/>
</dbReference>
<dbReference type="GO" id="GO:0032040">
    <property type="term" value="C:small-subunit processome"/>
    <property type="evidence" value="ECO:0000314"/>
    <property type="project" value="SGD"/>
</dbReference>
<dbReference type="GO" id="GO:0019843">
    <property type="term" value="F:rRNA binding"/>
    <property type="evidence" value="ECO:0000314"/>
    <property type="project" value="SGD"/>
</dbReference>
<dbReference type="GO" id="GO:0003735">
    <property type="term" value="F:structural constituent of ribosome"/>
    <property type="evidence" value="ECO:0000314"/>
    <property type="project" value="SGD"/>
</dbReference>
<dbReference type="GO" id="GO:0000462">
    <property type="term" value="P:maturation of SSU-rRNA from tricistronic rRNA transcript (SSU-rRNA, 5.8S rRNA, LSU-rRNA)"/>
    <property type="evidence" value="ECO:0000316"/>
    <property type="project" value="SGD"/>
</dbReference>
<dbReference type="GO" id="GO:0042274">
    <property type="term" value="P:ribosomal small subunit biogenesis"/>
    <property type="evidence" value="ECO:0000318"/>
    <property type="project" value="GO_Central"/>
</dbReference>
<dbReference type="GO" id="GO:0006412">
    <property type="term" value="P:translation"/>
    <property type="evidence" value="ECO:0007669"/>
    <property type="project" value="InterPro"/>
</dbReference>
<dbReference type="CDD" id="cd00165">
    <property type="entry name" value="S4"/>
    <property type="match status" value="1"/>
</dbReference>
<dbReference type="FunFam" id="3.10.290.10:FF:000021">
    <property type="entry name" value="40S ribosomal protein S9"/>
    <property type="match status" value="1"/>
</dbReference>
<dbReference type="Gene3D" id="3.10.290.10">
    <property type="entry name" value="RNA-binding S4 domain"/>
    <property type="match status" value="1"/>
</dbReference>
<dbReference type="InterPro" id="IPR022801">
    <property type="entry name" value="Ribosomal_uS4"/>
</dbReference>
<dbReference type="InterPro" id="IPR018079">
    <property type="entry name" value="Ribosomal_uS4_CS"/>
</dbReference>
<dbReference type="InterPro" id="IPR005710">
    <property type="entry name" value="Ribosomal_uS4_euk/arc"/>
</dbReference>
<dbReference type="InterPro" id="IPR001912">
    <property type="entry name" value="Ribosomal_uS4_N"/>
</dbReference>
<dbReference type="InterPro" id="IPR002942">
    <property type="entry name" value="S4_RNA-bd"/>
</dbReference>
<dbReference type="InterPro" id="IPR036986">
    <property type="entry name" value="S4_RNA-bd_sf"/>
</dbReference>
<dbReference type="NCBIfam" id="NF003139">
    <property type="entry name" value="PRK04051.1"/>
    <property type="match status" value="1"/>
</dbReference>
<dbReference type="NCBIfam" id="TIGR01018">
    <property type="entry name" value="uS4_arch"/>
    <property type="match status" value="1"/>
</dbReference>
<dbReference type="PANTHER" id="PTHR11831">
    <property type="entry name" value="30S 40S RIBOSOMAL PROTEIN"/>
    <property type="match status" value="1"/>
</dbReference>
<dbReference type="PANTHER" id="PTHR11831:SF5">
    <property type="entry name" value="40S RIBOSOMAL PROTEIN S9"/>
    <property type="match status" value="1"/>
</dbReference>
<dbReference type="Pfam" id="PF00163">
    <property type="entry name" value="Ribosomal_S4"/>
    <property type="match status" value="1"/>
</dbReference>
<dbReference type="Pfam" id="PF01479">
    <property type="entry name" value="S4"/>
    <property type="match status" value="1"/>
</dbReference>
<dbReference type="SMART" id="SM01390">
    <property type="entry name" value="Ribosomal_S4"/>
    <property type="match status" value="1"/>
</dbReference>
<dbReference type="SMART" id="SM00363">
    <property type="entry name" value="S4"/>
    <property type="match status" value="1"/>
</dbReference>
<dbReference type="SUPFAM" id="SSF55174">
    <property type="entry name" value="Alpha-L RNA-binding motif"/>
    <property type="match status" value="1"/>
</dbReference>
<dbReference type="PROSITE" id="PS00632">
    <property type="entry name" value="RIBOSOMAL_S4"/>
    <property type="match status" value="1"/>
</dbReference>
<dbReference type="PROSITE" id="PS50889">
    <property type="entry name" value="S4"/>
    <property type="match status" value="1"/>
</dbReference>
<proteinExistence type="evidence at protein level"/>
<feature type="initiator methionine" description="Removed" evidence="7">
    <location>
        <position position="1"/>
    </location>
</feature>
<feature type="chain" id="PRO_0000132703" description="Small ribosomal subunit protein uS4A">
    <location>
        <begin position="2"/>
        <end position="197"/>
    </location>
</feature>
<feature type="domain" description="S4 RNA-binding" evidence="2">
    <location>
        <begin position="107"/>
        <end position="181"/>
    </location>
</feature>
<feature type="region of interest" description="Disordered" evidence="3">
    <location>
        <begin position="160"/>
        <end position="197"/>
    </location>
</feature>
<feature type="compositionally biased region" description="Acidic residues" evidence="3">
    <location>
        <begin position="187"/>
        <end position="197"/>
    </location>
</feature>
<feature type="modified residue" description="Phosphoserine" evidence="1">
    <location>
        <position position="184"/>
    </location>
</feature>
<feature type="cross-link" description="Glycyl lysine isopeptide (Lys-Gly) (interchain with G-Cter in ubiquitin)" evidence="1">
    <location>
        <position position="180"/>
    </location>
</feature>
<feature type="sequence conflict" description="In Ref. 4; AA sequence." evidence="10" ref="4">
    <original>ESS</original>
    <variation>QSB</variation>
    <location>
        <begin position="20"/>
        <end position="22"/>
    </location>
</feature>
<feature type="strand" evidence="14">
    <location>
        <begin position="16"/>
        <end position="18"/>
    </location>
</feature>
<feature type="helix" evidence="16">
    <location>
        <begin position="21"/>
        <end position="34"/>
    </location>
</feature>
<feature type="strand" evidence="17">
    <location>
        <begin position="37"/>
        <end position="39"/>
    </location>
</feature>
<feature type="helix" evidence="16">
    <location>
        <begin position="40"/>
        <end position="59"/>
    </location>
</feature>
<feature type="strand" evidence="13">
    <location>
        <begin position="60"/>
        <end position="62"/>
    </location>
</feature>
<feature type="helix" evidence="16">
    <location>
        <begin position="67"/>
        <end position="82"/>
    </location>
</feature>
<feature type="strand" evidence="17">
    <location>
        <begin position="84"/>
        <end position="86"/>
    </location>
</feature>
<feature type="strand" evidence="15">
    <location>
        <begin position="88"/>
        <end position="90"/>
    </location>
</feature>
<feature type="helix" evidence="16">
    <location>
        <begin position="93"/>
        <end position="96"/>
    </location>
</feature>
<feature type="helix" evidence="16">
    <location>
        <begin position="101"/>
        <end position="105"/>
    </location>
</feature>
<feature type="strand" evidence="14">
    <location>
        <begin position="106"/>
        <end position="108"/>
    </location>
</feature>
<feature type="helix" evidence="16">
    <location>
        <begin position="109"/>
        <end position="115"/>
    </location>
</feature>
<feature type="strand" evidence="15">
    <location>
        <begin position="117"/>
        <end position="121"/>
    </location>
</feature>
<feature type="helix" evidence="16">
    <location>
        <begin position="122"/>
        <end position="130"/>
    </location>
</feature>
<feature type="strand" evidence="16">
    <location>
        <begin position="134"/>
        <end position="136"/>
    </location>
</feature>
<feature type="helix" evidence="16">
    <location>
        <begin position="152"/>
        <end position="155"/>
    </location>
</feature>
<feature type="strand" evidence="16">
    <location>
        <begin position="156"/>
        <end position="158"/>
    </location>
</feature>
<feature type="strand" evidence="14">
    <location>
        <begin position="160"/>
        <end position="162"/>
    </location>
</feature>
<feature type="turn" evidence="16">
    <location>
        <begin position="163"/>
        <end position="166"/>
    </location>
</feature>
<feature type="helix" evidence="16">
    <location>
        <begin position="171"/>
        <end position="184"/>
    </location>
</feature>